<keyword id="KW-0067">ATP-binding</keyword>
<keyword id="KW-0963">Cytoplasm</keyword>
<keyword id="KW-0418">Kinase</keyword>
<keyword id="KW-0547">Nucleotide-binding</keyword>
<keyword id="KW-0597">Phosphoprotein</keyword>
<keyword id="KW-1185">Reference proteome</keyword>
<keyword id="KW-0723">Serine/threonine-protein kinase</keyword>
<keyword id="KW-0808">Transferase</keyword>
<keyword id="KW-0829">Tyrosine-protein kinase</keyword>
<reference key="1">
    <citation type="submission" date="1999-04" db="EMBL/GenBank/DDBJ databases">
        <title>Structural analysis of Arabidopsis thaliana chromosome 5. XI.</title>
        <authorList>
            <person name="Kaneko T."/>
            <person name="Katoh T."/>
            <person name="Asamizu E."/>
            <person name="Sato S."/>
            <person name="Nakamura Y."/>
            <person name="Kotani H."/>
            <person name="Tabata S."/>
        </authorList>
    </citation>
    <scope>NUCLEOTIDE SEQUENCE [LARGE SCALE GENOMIC DNA]</scope>
    <source>
        <strain>cv. Columbia</strain>
    </source>
</reference>
<reference key="2">
    <citation type="journal article" date="2017" name="Plant J.">
        <title>Araport11: a complete reannotation of the Arabidopsis thaliana reference genome.</title>
        <authorList>
            <person name="Cheng C.Y."/>
            <person name="Krishnakumar V."/>
            <person name="Chan A.P."/>
            <person name="Thibaud-Nissen F."/>
            <person name="Schobel S."/>
            <person name="Town C.D."/>
        </authorList>
    </citation>
    <scope>GENOME REANNOTATION</scope>
    <source>
        <strain>cv. Columbia</strain>
    </source>
</reference>
<reference key="3">
    <citation type="submission" date="2002-03" db="EMBL/GenBank/DDBJ databases">
        <title>Full-length cDNA from Arabidopsis thaliana.</title>
        <authorList>
            <person name="Brover V.V."/>
            <person name="Troukhan M.E."/>
            <person name="Alexandrov N.A."/>
            <person name="Lu Y.-P."/>
            <person name="Flavell R.B."/>
            <person name="Feldmann K.A."/>
        </authorList>
    </citation>
    <scope>NUCLEOTIDE SEQUENCE [LARGE SCALE MRNA]</scope>
</reference>
<reference key="4">
    <citation type="journal article" date="2002" name="Trends Plant Sci.">
        <title>Mitogen-activated protein kinase cascades in plants: a new nomenclature.</title>
        <authorList>
            <consortium name="MAPK group"/>
        </authorList>
    </citation>
    <scope>GENE FAMILY</scope>
</reference>
<reference key="5">
    <citation type="journal article" date="2006" name="Plant Mol. Biol.">
        <title>Genome-wide analysis and experimentation of plant serine/threonine/tyrosine-specific protein kinases.</title>
        <authorList>
            <person name="Rudrabhatla P."/>
            <person name="Reddy M.M."/>
            <person name="Rajasekharan R."/>
        </authorList>
    </citation>
    <scope>GENE FAMILY</scope>
    <scope>NOMENCLATURE</scope>
</reference>
<reference key="6">
    <citation type="journal article" date="2017" name="Nat. Commun.">
        <title>Blue light and CO2 signals converge to regulate light-induced stomatal opening.</title>
        <authorList>
            <person name="Hiyama A."/>
            <person name="Takemiya A."/>
            <person name="Munemasa S."/>
            <person name="Okuma E."/>
            <person name="Sugiyama N."/>
            <person name="Tada Y."/>
            <person name="Murata Y."/>
            <person name="Shimazaki K.-I."/>
        </authorList>
    </citation>
    <scope>FUNCTION</scope>
    <scope>DISRUPTION PHENOTYPE</scope>
    <scope>MUTAGENESIS OF ASP-245</scope>
    <scope>INTERACTION WITH CBC1</scope>
    <scope>CATALYTIC ACTIVITY</scope>
    <scope>AUTOPHOSPHORYLATION</scope>
    <scope>PHOSPHORYLATION BY HT1</scope>
    <scope>TISSUE SPECIFICITY</scope>
    <scope>SUBCELLULAR LOCATION</scope>
</reference>
<reference key="7">
    <citation type="journal article" date="2020" name="Photochem. Photobiol. Sci.">
        <title>Raf-like kinases CBC1 and CBC2 negatively regulate stomatal opening by negatively regulating plasma membrane H+-ATPase phosphorylation in Arabidopsis.</title>
        <authorList>
            <person name="Hayashi M."/>
            <person name="Sugimoto H."/>
            <person name="Takahashi H."/>
            <person name="Seki M."/>
            <person name="Shinozaki K."/>
            <person name="Sawasaki T."/>
            <person name="Kinoshita T."/>
            <person name="Inoue S.-I."/>
        </authorList>
    </citation>
    <scope>FUNCTION</scope>
    <scope>DISRUPTION PHENOTYPE</scope>
    <scope>INTERACTION WITH PHOT1; PHOT2; BLUS1 AND AHA1</scope>
    <scope>TISSUE SPECIFICITY</scope>
    <scope>SUBCELLULAR LOCATION</scope>
    <source>
        <strain>cv. Columbia</strain>
    </source>
</reference>
<name>CBC2_ARATH</name>
<organism>
    <name type="scientific">Arabidopsis thaliana</name>
    <name type="common">Mouse-ear cress</name>
    <dbReference type="NCBI Taxonomy" id="3702"/>
    <lineage>
        <taxon>Eukaryota</taxon>
        <taxon>Viridiplantae</taxon>
        <taxon>Streptophyta</taxon>
        <taxon>Embryophyta</taxon>
        <taxon>Tracheophyta</taxon>
        <taxon>Spermatophyta</taxon>
        <taxon>Magnoliopsida</taxon>
        <taxon>eudicotyledons</taxon>
        <taxon>Gunneridae</taxon>
        <taxon>Pentapetalae</taxon>
        <taxon>rosids</taxon>
        <taxon>malvids</taxon>
        <taxon>Brassicales</taxon>
        <taxon>Brassicaceae</taxon>
        <taxon>Camelineae</taxon>
        <taxon>Arabidopsis</taxon>
    </lineage>
</organism>
<sequence length="385" mass="42729">MKEGKDGFVRADQIDLKSLDEQLERHLSRALTLEKNKKKDEEDTTAVAIGGSASSSPVTLNGGGFVGKRKQRLEWEIDPSKLIIKTVLARGTFGTVHRGIYDGQDVAVKLLDWGEEGHRSEAEIVSLRADFAQEVAVWHKLDHPNVTKFIGATMGASGLQLQTESGPLAMPNNICCVVVEYLPGGALKSYLIKNRRRKLTFKIVVQLALDLARGLSYLHSQKIVHRDVKTENMLLDKTRTVKIADFGVARVEASNPNDMTGETGTLGYMAPEVLNGNPYNRKCDVYSFGICLWEIYCCDMPYPDLTFSEVTSAVVRQNLRPDIPRCCPSALAAVMKRCWDANPDKRPEMDEVVPMLESIDTTKGGGMIPNDQQQGCLCFRRKRGP</sequence>
<proteinExistence type="evidence at protein level"/>
<dbReference type="EC" id="2.7.11.1" evidence="2"/>
<dbReference type="EMBL" id="AB026650">
    <property type="protein sequence ID" value="BAB10286.1"/>
    <property type="molecule type" value="Genomic_DNA"/>
</dbReference>
<dbReference type="EMBL" id="CP002688">
    <property type="protein sequence ID" value="AED95882.1"/>
    <property type="molecule type" value="Genomic_DNA"/>
</dbReference>
<dbReference type="EMBL" id="AY085263">
    <property type="protein sequence ID" value="AAM62495.1"/>
    <property type="molecule type" value="mRNA"/>
</dbReference>
<dbReference type="RefSeq" id="NP_199811.1">
    <property type="nucleotide sequence ID" value="NM_124379.2"/>
</dbReference>
<dbReference type="SMR" id="Q9FGB1"/>
<dbReference type="FunCoup" id="Q9FGB1">
    <property type="interactions" value="936"/>
</dbReference>
<dbReference type="STRING" id="3702.AT5G50000.1"/>
<dbReference type="iPTMnet" id="Q9FGB1"/>
<dbReference type="SwissPalm" id="Q9FGB1"/>
<dbReference type="PaxDb" id="3702-AT5G50000.1"/>
<dbReference type="ProteomicsDB" id="176911"/>
<dbReference type="EnsemblPlants" id="AT5G50000.1">
    <property type="protein sequence ID" value="AT5G50000.1"/>
    <property type="gene ID" value="AT5G50000"/>
</dbReference>
<dbReference type="GeneID" id="835064"/>
<dbReference type="Gramene" id="AT5G50000.1">
    <property type="protein sequence ID" value="AT5G50000.1"/>
    <property type="gene ID" value="AT5G50000"/>
</dbReference>
<dbReference type="Araport" id="AT5G50000"/>
<dbReference type="TAIR" id="AT5G50000">
    <property type="gene designation" value="CBC2"/>
</dbReference>
<dbReference type="eggNOG" id="KOG0192">
    <property type="taxonomic scope" value="Eukaryota"/>
</dbReference>
<dbReference type="HOGENOM" id="CLU_000288_7_35_1"/>
<dbReference type="OMA" id="MYDHPNV"/>
<dbReference type="OrthoDB" id="4062651at2759"/>
<dbReference type="Proteomes" id="UP000006548">
    <property type="component" value="Chromosome 5"/>
</dbReference>
<dbReference type="ExpressionAtlas" id="Q9FGB1">
    <property type="expression patterns" value="baseline and differential"/>
</dbReference>
<dbReference type="GO" id="GO:0005737">
    <property type="term" value="C:cytoplasm"/>
    <property type="evidence" value="ECO:0000314"/>
    <property type="project" value="TAIR"/>
</dbReference>
<dbReference type="GO" id="GO:0005829">
    <property type="term" value="C:cytosol"/>
    <property type="evidence" value="ECO:0000314"/>
    <property type="project" value="UniProtKB"/>
</dbReference>
<dbReference type="GO" id="GO:0005886">
    <property type="term" value="C:plasma membrane"/>
    <property type="evidence" value="ECO:0007005"/>
    <property type="project" value="TAIR"/>
</dbReference>
<dbReference type="GO" id="GO:0009506">
    <property type="term" value="C:plasmodesma"/>
    <property type="evidence" value="ECO:0007005"/>
    <property type="project" value="TAIR"/>
</dbReference>
<dbReference type="GO" id="GO:0009536">
    <property type="term" value="C:plastid"/>
    <property type="evidence" value="ECO:0007005"/>
    <property type="project" value="TAIR"/>
</dbReference>
<dbReference type="GO" id="GO:0005524">
    <property type="term" value="F:ATP binding"/>
    <property type="evidence" value="ECO:0007669"/>
    <property type="project" value="UniProtKB-KW"/>
</dbReference>
<dbReference type="GO" id="GO:0004674">
    <property type="term" value="F:protein serine/threonine kinase activity"/>
    <property type="evidence" value="ECO:0000315"/>
    <property type="project" value="UniProtKB"/>
</dbReference>
<dbReference type="GO" id="GO:0004712">
    <property type="term" value="F:protein serine/threonine/tyrosine kinase activity"/>
    <property type="evidence" value="ECO:0000250"/>
    <property type="project" value="TAIR"/>
</dbReference>
<dbReference type="GO" id="GO:0004713">
    <property type="term" value="F:protein tyrosine kinase activity"/>
    <property type="evidence" value="ECO:0007669"/>
    <property type="project" value="UniProtKB-KW"/>
</dbReference>
<dbReference type="GO" id="GO:0071244">
    <property type="term" value="P:cellular response to carbon dioxide"/>
    <property type="evidence" value="ECO:0000315"/>
    <property type="project" value="UniProtKB"/>
</dbReference>
<dbReference type="GO" id="GO:1902456">
    <property type="term" value="P:regulation of stomatal opening"/>
    <property type="evidence" value="ECO:0000315"/>
    <property type="project" value="UniProtKB"/>
</dbReference>
<dbReference type="GO" id="GO:0009637">
    <property type="term" value="P:response to blue light"/>
    <property type="evidence" value="ECO:0000315"/>
    <property type="project" value="UniProtKB"/>
</dbReference>
<dbReference type="GO" id="GO:0010114">
    <property type="term" value="P:response to red light"/>
    <property type="evidence" value="ECO:0000315"/>
    <property type="project" value="UniProtKB"/>
</dbReference>
<dbReference type="GO" id="GO:0001659">
    <property type="term" value="P:temperature homeostasis"/>
    <property type="evidence" value="ECO:0000315"/>
    <property type="project" value="UniProtKB"/>
</dbReference>
<dbReference type="CDD" id="cd13999">
    <property type="entry name" value="STKc_MAP3K-like"/>
    <property type="match status" value="1"/>
</dbReference>
<dbReference type="FunFam" id="3.30.200.20:FF:000034">
    <property type="entry name" value="Kinase suppressor of Ras 1"/>
    <property type="match status" value="1"/>
</dbReference>
<dbReference type="FunFam" id="1.10.510.10:FF:000310">
    <property type="entry name" value="Serine/threonine-protein kinase HT1"/>
    <property type="match status" value="1"/>
</dbReference>
<dbReference type="Gene3D" id="3.30.200.20">
    <property type="entry name" value="Phosphorylase Kinase, domain 1"/>
    <property type="match status" value="1"/>
</dbReference>
<dbReference type="Gene3D" id="1.10.510.10">
    <property type="entry name" value="Transferase(Phosphotransferase) domain 1"/>
    <property type="match status" value="1"/>
</dbReference>
<dbReference type="InterPro" id="IPR011009">
    <property type="entry name" value="Kinase-like_dom_sf"/>
</dbReference>
<dbReference type="InterPro" id="IPR000719">
    <property type="entry name" value="Prot_kinase_dom"/>
</dbReference>
<dbReference type="InterPro" id="IPR001245">
    <property type="entry name" value="Ser-Thr/Tyr_kinase_cat_dom"/>
</dbReference>
<dbReference type="InterPro" id="IPR008271">
    <property type="entry name" value="Ser/Thr_kinase_AS"/>
</dbReference>
<dbReference type="InterPro" id="IPR051681">
    <property type="entry name" value="Ser/Thr_Kinases-Pseudokinases"/>
</dbReference>
<dbReference type="PANTHER" id="PTHR44329:SF280">
    <property type="entry name" value="PROTEIN KINASE"/>
    <property type="match status" value="1"/>
</dbReference>
<dbReference type="PANTHER" id="PTHR44329">
    <property type="entry name" value="SERINE/THREONINE-PROTEIN KINASE TNNI3K-RELATED"/>
    <property type="match status" value="1"/>
</dbReference>
<dbReference type="Pfam" id="PF07714">
    <property type="entry name" value="PK_Tyr_Ser-Thr"/>
    <property type="match status" value="1"/>
</dbReference>
<dbReference type="PRINTS" id="PR00109">
    <property type="entry name" value="TYRKINASE"/>
</dbReference>
<dbReference type="SMART" id="SM00220">
    <property type="entry name" value="S_TKc"/>
    <property type="match status" value="1"/>
</dbReference>
<dbReference type="SUPFAM" id="SSF56112">
    <property type="entry name" value="Protein kinase-like (PK-like)"/>
    <property type="match status" value="1"/>
</dbReference>
<dbReference type="PROSITE" id="PS50011">
    <property type="entry name" value="PROTEIN_KINASE_DOM"/>
    <property type="match status" value="1"/>
</dbReference>
<dbReference type="PROSITE" id="PS00108">
    <property type="entry name" value="PROTEIN_KINASE_ST"/>
    <property type="match status" value="1"/>
</dbReference>
<comment type="function">
    <text evidence="2 3">Serine/threonine protein kinase that phosphorylates proteins on serine and threonine residues (PubMed:29101334). Collectively with CBC1, acts as a negative regulator of stomatal opening, probably via the inhibition of plasma membrane-type ATPases (AHA1 and AHA2) activity in guard cells, but in an abscisic acid (ABA)-independent manner (PubMed:31904040). However, at low concentrations of CO(2), together with CBC1, stimulates stomatal opening via the inhibition of S-type anion channels in response to blue light (BL) and red light (RL), thus being a key component to maximize photosynthesis in the light under low CO(2) conditions (PubMed:29101334, PubMed:31904040). Required for temperature decrease in leaves (PubMed:29101334). Downstream target of HIGH LEAF TEMPERATURE1 (HT1) during low CO(2)-induced stomatal opening (PubMed:29101334).</text>
</comment>
<comment type="catalytic activity">
    <reaction evidence="2">
        <text>L-seryl-[protein] + ATP = O-phospho-L-seryl-[protein] + ADP + H(+)</text>
        <dbReference type="Rhea" id="RHEA:17989"/>
        <dbReference type="Rhea" id="RHEA-COMP:9863"/>
        <dbReference type="Rhea" id="RHEA-COMP:11604"/>
        <dbReference type="ChEBI" id="CHEBI:15378"/>
        <dbReference type="ChEBI" id="CHEBI:29999"/>
        <dbReference type="ChEBI" id="CHEBI:30616"/>
        <dbReference type="ChEBI" id="CHEBI:83421"/>
        <dbReference type="ChEBI" id="CHEBI:456216"/>
        <dbReference type="EC" id="2.7.11.1"/>
    </reaction>
</comment>
<comment type="catalytic activity">
    <reaction evidence="2">
        <text>L-threonyl-[protein] + ATP = O-phospho-L-threonyl-[protein] + ADP + H(+)</text>
        <dbReference type="Rhea" id="RHEA:46608"/>
        <dbReference type="Rhea" id="RHEA-COMP:11060"/>
        <dbReference type="Rhea" id="RHEA-COMP:11605"/>
        <dbReference type="ChEBI" id="CHEBI:15378"/>
        <dbReference type="ChEBI" id="CHEBI:30013"/>
        <dbReference type="ChEBI" id="CHEBI:30616"/>
        <dbReference type="ChEBI" id="CHEBI:61977"/>
        <dbReference type="ChEBI" id="CHEBI:456216"/>
        <dbReference type="EC" id="2.7.11.1"/>
    </reaction>
</comment>
<comment type="subunit">
    <text evidence="2 3">Binds to CBC1 (PubMed:29101334). Associates with PHOT1, PHOT2, BLUS1 and PM H(+)-ATPase (e.g. AHA1) (PubMed:31904040).</text>
</comment>
<comment type="subcellular location">
    <subcellularLocation>
        <location evidence="2 3">Cytoplasm</location>
        <location evidence="2 3">Cytosol</location>
    </subcellularLocation>
</comment>
<comment type="tissue specificity">
    <text evidence="2 3">Expressed in guard cells.</text>
</comment>
<comment type="PTM">
    <text evidence="2">Autophosphorylated (PubMed:29101334). Phosphorylated by HT1 in response to low CO(2) concentrations (PubMed:29101334).</text>
</comment>
<comment type="disruption phenotype">
    <text evidence="2 3">Partial impairment in temperature decrease and slightly impaired stomatal opening triggered by blue light (BL) (PubMed:29101334). The double mutant cbc1 cbc2 exhibits a reduced voltage-dependent inward-rectifying K(+) current and suppressed low CO(2), red and blue light-induced stomatal opening leading to a severely impaired temperature decrease (PubMed:29101334). Larger stomatal opening under both dark and blue light conditions in cbc1 cbc2 plants, and associated with increased phosphorylation of C-terminal Thr in plasma membrane-type ATPases (AHA1 and AHA2) in guard cells (PubMed:31904040). Altered CO(2)-triggered stomatal closure (PubMed:29101334).</text>
</comment>
<comment type="similarity">
    <text evidence="1">Belongs to the protein kinase superfamily. Ser/Thr protein kinase family.</text>
</comment>
<evidence type="ECO:0000255" key="1">
    <source>
        <dbReference type="PROSITE-ProRule" id="PRU00159"/>
    </source>
</evidence>
<evidence type="ECO:0000269" key="2">
    <source>
    </source>
</evidence>
<evidence type="ECO:0000269" key="3">
    <source>
    </source>
</evidence>
<evidence type="ECO:0000303" key="4">
    <source>
    </source>
</evidence>
<evidence type="ECO:0000303" key="5">
    <source>
    </source>
</evidence>
<evidence type="ECO:0000312" key="6">
    <source>
        <dbReference type="Araport" id="AT5G50000"/>
    </source>
</evidence>
<evidence type="ECO:0000312" key="7">
    <source>
        <dbReference type="EMBL" id="BAB10286.1"/>
    </source>
</evidence>
<accession>Q9FGB1</accession>
<accession>Q8LES3</accession>
<gene>
    <name evidence="5" type="primary">CBC2</name>
    <name evidence="4" type="synonym">STY52</name>
    <name evidence="6" type="ordered locus">At5g50000</name>
    <name evidence="7" type="ORF">MPF21.1</name>
</gene>
<protein>
    <recommendedName>
        <fullName evidence="4">Serine/threonine-protein kinase 52</fullName>
        <ecNumber evidence="2">2.7.11.1</ecNumber>
    </recommendedName>
    <alternativeName>
        <fullName evidence="5">Protein CONVERGENCE OF BLUE LIGHT AND CO2 2</fullName>
    </alternativeName>
</protein>
<feature type="chain" id="PRO_0000459727" description="Serine/threonine-protein kinase 52">
    <location>
        <begin position="1"/>
        <end position="385"/>
    </location>
</feature>
<feature type="domain" description="Protein kinase" evidence="1">
    <location>
        <begin position="82"/>
        <end position="356"/>
    </location>
</feature>
<feature type="active site" description="Proton acceptor" evidence="1">
    <location>
        <position position="227"/>
    </location>
</feature>
<feature type="binding site" evidence="1">
    <location>
        <begin position="88"/>
        <end position="96"/>
    </location>
    <ligand>
        <name>ATP</name>
        <dbReference type="ChEBI" id="CHEBI:30616"/>
    </ligand>
</feature>
<feature type="binding site" evidence="1">
    <location>
        <position position="109"/>
    </location>
    <ligand>
        <name>ATP</name>
        <dbReference type="ChEBI" id="CHEBI:30616"/>
    </ligand>
</feature>
<feature type="mutagenesis site" description="Lost kinase activity and impaired autophosphorylation." evidence="2">
    <original>D</original>
    <variation>N</variation>
    <location>
        <position position="245"/>
    </location>
</feature>